<reference key="1">
    <citation type="journal article" date="2003" name="Nature">
        <title>The genome of a motile marine Synechococcus.</title>
        <authorList>
            <person name="Palenik B."/>
            <person name="Brahamsha B."/>
            <person name="Larimer F.W."/>
            <person name="Land M.L."/>
            <person name="Hauser L."/>
            <person name="Chain P."/>
            <person name="Lamerdin J.E."/>
            <person name="Regala W."/>
            <person name="Allen E.E."/>
            <person name="McCarren J."/>
            <person name="Paulsen I.T."/>
            <person name="Dufresne A."/>
            <person name="Partensky F."/>
            <person name="Webb E.A."/>
            <person name="Waterbury J."/>
        </authorList>
    </citation>
    <scope>NUCLEOTIDE SEQUENCE [LARGE SCALE GENOMIC DNA]</scope>
    <source>
        <strain>WH8102</strain>
    </source>
</reference>
<keyword id="KW-0004">4Fe-4S</keyword>
<keyword id="KW-0148">Chlorophyll</keyword>
<keyword id="KW-0157">Chromophore</keyword>
<keyword id="KW-0249">Electron transport</keyword>
<keyword id="KW-0408">Iron</keyword>
<keyword id="KW-0411">Iron-sulfur</keyword>
<keyword id="KW-0460">Magnesium</keyword>
<keyword id="KW-0472">Membrane</keyword>
<keyword id="KW-0479">Metal-binding</keyword>
<keyword id="KW-0560">Oxidoreductase</keyword>
<keyword id="KW-0602">Photosynthesis</keyword>
<keyword id="KW-0603">Photosystem I</keyword>
<keyword id="KW-0793">Thylakoid</keyword>
<keyword id="KW-0812">Transmembrane</keyword>
<keyword id="KW-1133">Transmembrane helix</keyword>
<keyword id="KW-0813">Transport</keyword>
<organism>
    <name type="scientific">Parasynechococcus marenigrum (strain WH8102)</name>
    <dbReference type="NCBI Taxonomy" id="84588"/>
    <lineage>
        <taxon>Bacteria</taxon>
        <taxon>Bacillati</taxon>
        <taxon>Cyanobacteriota</taxon>
        <taxon>Cyanophyceae</taxon>
        <taxon>Synechococcales</taxon>
        <taxon>Prochlorococcaceae</taxon>
        <taxon>Parasynechococcus</taxon>
        <taxon>Parasynechococcus marenigrum</taxon>
    </lineage>
</organism>
<sequence length="767" mass="83647">MTISPPERGSDAKSQVEKVDNPATFELFGKPGHFDRALAKGPKTTSWVWNLHANAHDFDAHTSDLQEVSRRIFSAHFGHLAVIFIWLSGAFFHGARFSNYSGWLADPTHVKPSAQVVWPIFGQEILNGDMGAGFQGIQITSGLFHVWRGWGITSETQLMALAIGALVMAGLMLNAGVFHYHKAAPKLEWFQNVESMLNHHLAGLLGLGSLSWAGHLIHVSAPVSKLMDAIDAGQPLVLDGKTIATVADIPLPHEFFNQDLLAQLYPGIGAGIGAFFSGNWAAYSDFLTFKGGLNPVTGSLWMTDIAHHHVAIAVLFIVAGHMYRTNWGIGHSIKEIHEGQKGDPLLFPAPNGHDGLYEFLTTSWHAQLGLNLAMLGSLSIIVAQHMYAMPPYAYMAVDYPTQIGLFTHHMWIGGFLIVGGAAHAAIAMVRDYDPAKHIDNVLDRVLKARDAIISHLNWVCIWLGAHSFGLYIHNDTMRALGRPQDMFSDSAISIQPIFAQWIQNAHAAAAGSTAPNALAGVSEVFNGSVVAVGGKVAAAPMPLGTADFMVHHIHAFTIHVTVLILLKGVLYARSSRLIPDKANLGFRFSCDGPGRGGTCQVSAWDHVFLGLFWMYNSLSIVIFHFSWKMQSDIWGTVNADGSVAHITNGNFAQSAITINGWLRDYLWAQAVQVINSYGSNTSAYGIMFLGAHFIWAFSLMFLFSGRGYWQELIESIVWAHNKLKVAPAIQPRALSIIQGRAVGVAHYLLGGIATTWAFFHAHILVVG</sequence>
<name>PSAA_PARMW</name>
<protein>
    <recommendedName>
        <fullName evidence="1">Photosystem I P700 chlorophyll a apoprotein A1</fullName>
        <ecNumber evidence="1">1.97.1.12</ecNumber>
    </recommendedName>
    <alternativeName>
        <fullName evidence="1">PsaA</fullName>
    </alternativeName>
</protein>
<accession>Q7U4E4</accession>
<gene>
    <name evidence="1" type="primary">psaA</name>
    <name type="ordered locus">SYNW2124</name>
</gene>
<comment type="function">
    <text evidence="1">PsaA and PsaB bind P700, the primary electron donor of photosystem I (PSI), as well as the electron acceptors A0, A1 and FX. PSI is a plastocyanin/cytochrome c6-ferredoxin oxidoreductase, converting photonic excitation into a charge separation, which transfers an electron from the donor P700 chlorophyll pair to the spectroscopically characterized acceptors A0, A1, FX, FA and FB in turn. Oxidized P700 is reduced on the lumenal side of the thylakoid membrane by plastocyanin or cytochrome c6.</text>
</comment>
<comment type="catalytic activity">
    <reaction evidence="1">
        <text>reduced [plastocyanin] + hnu + oxidized [2Fe-2S]-[ferredoxin] = oxidized [plastocyanin] + reduced [2Fe-2S]-[ferredoxin]</text>
        <dbReference type="Rhea" id="RHEA:30407"/>
        <dbReference type="Rhea" id="RHEA-COMP:10000"/>
        <dbReference type="Rhea" id="RHEA-COMP:10001"/>
        <dbReference type="Rhea" id="RHEA-COMP:10039"/>
        <dbReference type="Rhea" id="RHEA-COMP:10040"/>
        <dbReference type="ChEBI" id="CHEBI:29036"/>
        <dbReference type="ChEBI" id="CHEBI:30212"/>
        <dbReference type="ChEBI" id="CHEBI:33737"/>
        <dbReference type="ChEBI" id="CHEBI:33738"/>
        <dbReference type="ChEBI" id="CHEBI:49552"/>
        <dbReference type="EC" id="1.97.1.12"/>
    </reaction>
</comment>
<comment type="cofactor">
    <text evidence="1">PSI electron transfer chain: 5 chlorophyll a, 1 chlorophyll a', 2 phylloquinones and 3 4Fe-4S clusters. PSI core antenna: 90 chlorophyll a, 22 carotenoids, 3 phospholipids and 1 galactolipid. P700 is a chlorophyll a/chlorophyll a' dimer, A0 is one or more chlorophyll a, A1 is one or both phylloquinones and FX is a shared 4Fe-4S iron-sulfur center.</text>
</comment>
<comment type="subunit">
    <text evidence="1">The PsaA/B heterodimer binds the P700 chlorophyll special pair and subsequent electron acceptors. PSI consists of a core antenna complex that captures photons, and an electron transfer chain that converts photonic excitation into a charge separation. The cyanobacterial PSI reaction center is composed of one copy each of PsaA,B,C,D,E,F,I,J,K,L,M and X, and forms trimeric complexes.</text>
</comment>
<comment type="subcellular location">
    <subcellularLocation>
        <location evidence="1">Cellular thylakoid membrane</location>
        <topology evidence="1">Multi-pass membrane protein</topology>
    </subcellularLocation>
</comment>
<comment type="similarity">
    <text evidence="1">Belongs to the PsaA/PsaB family.</text>
</comment>
<feature type="chain" id="PRO_0000088594" description="Photosystem I P700 chlorophyll a apoprotein A1">
    <location>
        <begin position="1"/>
        <end position="767"/>
    </location>
</feature>
<feature type="transmembrane region" description="Helical; Name=I" evidence="1">
    <location>
        <begin position="72"/>
        <end position="95"/>
    </location>
</feature>
<feature type="transmembrane region" description="Helical; Name=II" evidence="1">
    <location>
        <begin position="158"/>
        <end position="181"/>
    </location>
</feature>
<feature type="transmembrane region" description="Helical; Name=III" evidence="1">
    <location>
        <begin position="197"/>
        <end position="221"/>
    </location>
</feature>
<feature type="transmembrane region" description="Helical; Name=IV" evidence="1">
    <location>
        <begin position="305"/>
        <end position="323"/>
    </location>
</feature>
<feature type="transmembrane region" description="Helical; Name=V" evidence="1">
    <location>
        <begin position="364"/>
        <end position="387"/>
    </location>
</feature>
<feature type="transmembrane region" description="Helical; Name=VI" evidence="1">
    <location>
        <begin position="403"/>
        <end position="429"/>
    </location>
</feature>
<feature type="transmembrane region" description="Helical; Name=VII" evidence="1">
    <location>
        <begin position="451"/>
        <end position="473"/>
    </location>
</feature>
<feature type="transmembrane region" description="Helical; Name=VIII" evidence="1">
    <location>
        <begin position="548"/>
        <end position="566"/>
    </location>
</feature>
<feature type="transmembrane region" description="Helical; Name=IX" evidence="1">
    <location>
        <begin position="606"/>
        <end position="627"/>
    </location>
</feature>
<feature type="transmembrane region" description="Helical; Name=X" evidence="1">
    <location>
        <begin position="681"/>
        <end position="703"/>
    </location>
</feature>
<feature type="transmembrane region" description="Helical; Name=XI" evidence="1">
    <location>
        <begin position="741"/>
        <end position="761"/>
    </location>
</feature>
<feature type="binding site" evidence="1">
    <location>
        <position position="590"/>
    </location>
    <ligand>
        <name>[4Fe-4S] cluster</name>
        <dbReference type="ChEBI" id="CHEBI:49883"/>
        <note>ligand shared between dimeric partners</note>
    </ligand>
</feature>
<feature type="binding site" evidence="1">
    <location>
        <position position="599"/>
    </location>
    <ligand>
        <name>[4Fe-4S] cluster</name>
        <dbReference type="ChEBI" id="CHEBI:49883"/>
        <note>ligand shared between dimeric partners</note>
    </ligand>
</feature>
<feature type="binding site" description="axial binding residue" evidence="1">
    <location>
        <position position="692"/>
    </location>
    <ligand>
        <name>chlorophyll a'</name>
        <dbReference type="ChEBI" id="CHEBI:189419"/>
        <label>A1</label>
    </ligand>
    <ligandPart>
        <name>Mg</name>
        <dbReference type="ChEBI" id="CHEBI:25107"/>
    </ligandPart>
</feature>
<feature type="binding site" description="axial binding residue" evidence="1">
    <location>
        <position position="700"/>
    </location>
    <ligand>
        <name>chlorophyll a</name>
        <dbReference type="ChEBI" id="CHEBI:58416"/>
        <label>A3</label>
    </ligand>
    <ligandPart>
        <name>Mg</name>
        <dbReference type="ChEBI" id="CHEBI:25107"/>
    </ligandPart>
</feature>
<feature type="binding site" evidence="1">
    <location>
        <position position="708"/>
    </location>
    <ligand>
        <name>chlorophyll a</name>
        <dbReference type="ChEBI" id="CHEBI:58416"/>
        <label>A3</label>
    </ligand>
</feature>
<feature type="binding site" evidence="1">
    <location>
        <position position="709"/>
    </location>
    <ligand>
        <name>phylloquinone</name>
        <dbReference type="ChEBI" id="CHEBI:18067"/>
        <label>A</label>
    </ligand>
</feature>
<proteinExistence type="inferred from homology"/>
<dbReference type="EC" id="1.97.1.12" evidence="1"/>
<dbReference type="EMBL" id="BX569694">
    <property type="protein sequence ID" value="CAE08639.1"/>
    <property type="molecule type" value="Genomic_DNA"/>
</dbReference>
<dbReference type="RefSeq" id="WP_011128980.1">
    <property type="nucleotide sequence ID" value="NC_005070.1"/>
</dbReference>
<dbReference type="SMR" id="Q7U4E4"/>
<dbReference type="STRING" id="84588.SYNW2124"/>
<dbReference type="KEGG" id="syw:SYNW2124"/>
<dbReference type="eggNOG" id="COG2885">
    <property type="taxonomic scope" value="Bacteria"/>
</dbReference>
<dbReference type="HOGENOM" id="CLU_016126_1_0_3"/>
<dbReference type="Proteomes" id="UP000001422">
    <property type="component" value="Chromosome"/>
</dbReference>
<dbReference type="GO" id="GO:0009522">
    <property type="term" value="C:photosystem I"/>
    <property type="evidence" value="ECO:0007669"/>
    <property type="project" value="UniProtKB-KW"/>
</dbReference>
<dbReference type="GO" id="GO:0031676">
    <property type="term" value="C:plasma membrane-derived thylakoid membrane"/>
    <property type="evidence" value="ECO:0007669"/>
    <property type="project" value="UniProtKB-SubCell"/>
</dbReference>
<dbReference type="GO" id="GO:0051539">
    <property type="term" value="F:4 iron, 4 sulfur cluster binding"/>
    <property type="evidence" value="ECO:0007669"/>
    <property type="project" value="UniProtKB-KW"/>
</dbReference>
<dbReference type="GO" id="GO:0016168">
    <property type="term" value="F:chlorophyll binding"/>
    <property type="evidence" value="ECO:0007669"/>
    <property type="project" value="UniProtKB-KW"/>
</dbReference>
<dbReference type="GO" id="GO:0009055">
    <property type="term" value="F:electron transfer activity"/>
    <property type="evidence" value="ECO:0007669"/>
    <property type="project" value="UniProtKB-UniRule"/>
</dbReference>
<dbReference type="GO" id="GO:0000287">
    <property type="term" value="F:magnesium ion binding"/>
    <property type="evidence" value="ECO:0007669"/>
    <property type="project" value="UniProtKB-UniRule"/>
</dbReference>
<dbReference type="GO" id="GO:0016491">
    <property type="term" value="F:oxidoreductase activity"/>
    <property type="evidence" value="ECO:0007669"/>
    <property type="project" value="UniProtKB-KW"/>
</dbReference>
<dbReference type="GO" id="GO:0015979">
    <property type="term" value="P:photosynthesis"/>
    <property type="evidence" value="ECO:0007669"/>
    <property type="project" value="UniProtKB-UniRule"/>
</dbReference>
<dbReference type="Gene3D" id="1.20.1130.10">
    <property type="entry name" value="Photosystem I PsaA/PsaB"/>
    <property type="match status" value="1"/>
</dbReference>
<dbReference type="HAMAP" id="MF_00458">
    <property type="entry name" value="PSI_PsaA"/>
    <property type="match status" value="1"/>
</dbReference>
<dbReference type="InterPro" id="IPR006243">
    <property type="entry name" value="PSI_PsaA"/>
</dbReference>
<dbReference type="InterPro" id="IPR001280">
    <property type="entry name" value="PSI_PsaA/B"/>
</dbReference>
<dbReference type="InterPro" id="IPR020586">
    <property type="entry name" value="PSI_PsaA/B_CS"/>
</dbReference>
<dbReference type="InterPro" id="IPR036408">
    <property type="entry name" value="PSI_PsaA/B_sf"/>
</dbReference>
<dbReference type="NCBIfam" id="TIGR01335">
    <property type="entry name" value="psaA"/>
    <property type="match status" value="1"/>
</dbReference>
<dbReference type="PANTHER" id="PTHR30128">
    <property type="entry name" value="OUTER MEMBRANE PROTEIN, OMPA-RELATED"/>
    <property type="match status" value="1"/>
</dbReference>
<dbReference type="PANTHER" id="PTHR30128:SF19">
    <property type="entry name" value="PHOTOSYSTEM I P700 CHLOROPHYLL A APOPROTEIN A1-RELATED"/>
    <property type="match status" value="1"/>
</dbReference>
<dbReference type="Pfam" id="PF00223">
    <property type="entry name" value="PsaA_PsaB"/>
    <property type="match status" value="1"/>
</dbReference>
<dbReference type="PIRSF" id="PIRSF002905">
    <property type="entry name" value="PSI_A"/>
    <property type="match status" value="1"/>
</dbReference>
<dbReference type="PRINTS" id="PR00257">
    <property type="entry name" value="PHOTSYSPSAAB"/>
</dbReference>
<dbReference type="SUPFAM" id="SSF81558">
    <property type="entry name" value="Photosystem I subunits PsaA/PsaB"/>
    <property type="match status" value="1"/>
</dbReference>
<dbReference type="PROSITE" id="PS00419">
    <property type="entry name" value="PHOTOSYSTEM_I_PSAAB"/>
    <property type="match status" value="1"/>
</dbReference>
<evidence type="ECO:0000255" key="1">
    <source>
        <dbReference type="HAMAP-Rule" id="MF_00458"/>
    </source>
</evidence>